<reference key="1">
    <citation type="journal article" date="1996" name="DNA Res.">
        <title>A 570-kb DNA sequence of the Escherichia coli K-12 genome corresponding to the 28.0-40.1 min region on the linkage map.</title>
        <authorList>
            <person name="Aiba H."/>
            <person name="Baba T."/>
            <person name="Fujita K."/>
            <person name="Hayashi K."/>
            <person name="Inada T."/>
            <person name="Isono K."/>
            <person name="Itoh T."/>
            <person name="Kasai H."/>
            <person name="Kashimoto K."/>
            <person name="Kimura S."/>
            <person name="Kitakawa M."/>
            <person name="Kitagawa M."/>
            <person name="Makino K."/>
            <person name="Miki T."/>
            <person name="Mizobuchi K."/>
            <person name="Mori H."/>
            <person name="Mori T."/>
            <person name="Motomura K."/>
            <person name="Nakade S."/>
            <person name="Nakamura Y."/>
            <person name="Nashimoto H."/>
            <person name="Nishio Y."/>
            <person name="Oshima T."/>
            <person name="Saito N."/>
            <person name="Sampei G."/>
            <person name="Seki Y."/>
            <person name="Sivasundaram S."/>
            <person name="Tagami H."/>
            <person name="Takeda J."/>
            <person name="Takemoto K."/>
            <person name="Takeuchi Y."/>
            <person name="Wada C."/>
            <person name="Yamamoto Y."/>
            <person name="Horiuchi T."/>
        </authorList>
    </citation>
    <scope>NUCLEOTIDE SEQUENCE [LARGE SCALE GENOMIC DNA]</scope>
    <source>
        <strain>K12 / W3110 / ATCC 27325 / DSM 5911</strain>
    </source>
</reference>
<reference key="2">
    <citation type="journal article" date="1997" name="Science">
        <title>The complete genome sequence of Escherichia coli K-12.</title>
        <authorList>
            <person name="Blattner F.R."/>
            <person name="Plunkett G. III"/>
            <person name="Bloch C.A."/>
            <person name="Perna N.T."/>
            <person name="Burland V."/>
            <person name="Riley M."/>
            <person name="Collado-Vides J."/>
            <person name="Glasner J.D."/>
            <person name="Rode C.K."/>
            <person name="Mayhew G.F."/>
            <person name="Gregor J."/>
            <person name="Davis N.W."/>
            <person name="Kirkpatrick H.A."/>
            <person name="Goeden M.A."/>
            <person name="Rose D.J."/>
            <person name="Mau B."/>
            <person name="Shao Y."/>
        </authorList>
    </citation>
    <scope>NUCLEOTIDE SEQUENCE [LARGE SCALE GENOMIC DNA]</scope>
    <source>
        <strain>K12 / MG1655 / ATCC 47076</strain>
    </source>
</reference>
<reference key="3">
    <citation type="journal article" date="2006" name="Mol. Syst. Biol.">
        <title>Highly accurate genome sequences of Escherichia coli K-12 strains MG1655 and W3110.</title>
        <authorList>
            <person name="Hayashi K."/>
            <person name="Morooka N."/>
            <person name="Yamamoto Y."/>
            <person name="Fujita K."/>
            <person name="Isono K."/>
            <person name="Choi S."/>
            <person name="Ohtsubo E."/>
            <person name="Baba T."/>
            <person name="Wanner B.L."/>
            <person name="Mori H."/>
            <person name="Horiuchi T."/>
        </authorList>
    </citation>
    <scope>NUCLEOTIDE SEQUENCE [LARGE SCALE GENOMIC DNA]</scope>
    <source>
        <strain>K12 / W3110 / ATCC 27325 / DSM 5911</strain>
    </source>
</reference>
<reference key="4">
    <citation type="journal article" date="1986" name="Biochem. J.">
        <title>The overexpression and complete amino acid sequence of Escherichia coli 3-dehydroquinase.</title>
        <authorList>
            <person name="Duncan K."/>
            <person name="Chaudhuri S."/>
            <person name="Campbell M.S."/>
            <person name="Coggins J.R."/>
        </authorList>
    </citation>
    <scope>NUCLEOTIDE SEQUENCE [GENOMIC DNA] OF 1-64</scope>
</reference>
<reference key="5">
    <citation type="journal article" date="1994" name="Nucleic Acids Res.">
        <title>Intrinsic and extrinsic approaches for detecting genes in a bacterial genome.</title>
        <authorList>
            <person name="Borodovsky M."/>
            <person name="Rudd K.E."/>
            <person name="Koonin E.V."/>
        </authorList>
    </citation>
    <scope>IDENTIFICATION</scope>
</reference>
<accession>P37766</accession>
<accession>P76199</accession>
<accession>P76898</accession>
<evidence type="ECO:0000250" key="1">
    <source>
        <dbReference type="UniProtKB" id="Q8X5X6"/>
    </source>
</evidence>
<evidence type="ECO:0000305" key="2"/>
<proteinExistence type="inferred from homology"/>
<keyword id="KW-1185">Reference proteome</keyword>
<keyword id="KW-0808">Transferase</keyword>
<feature type="chain" id="PRO_0000168990" description="Acetate CoA-transferase YdiF">
    <location>
        <begin position="1"/>
        <end position="531"/>
    </location>
</feature>
<feature type="active site" description="5-glutamyl coenzyme A thioester intermediate" evidence="1">
    <location>
        <position position="333"/>
    </location>
</feature>
<sequence length="531" mass="57562">MKPVKPPRINGRVPVLSAQEAVNYIPDEATLCVLGAGGGILEATTLITALADKYKQTQTPRNLSIISPTGLGDRADRGISPLAQEGLVKWALCGHWGQSPRISELAEQNKIIAYNYPQGVLTQTLRAAAAHQPGIISDIGIGTFVDPRQQGGKLNEVTKEDLIKLVEFDNKEYLYYKAIAPDIAFIRATTCDSEGYATFEDEVMYLDALVIAQAVHNNGGIVMMQVQKMVKKATLHPKSVRIPGYLVDIVVVDPDQTQLYGGAPVNRFISGDFTLDDSTKLSLPLNQRKLVARRALFEMRKGAVGNVGVGIADGIGLVAREEGCADDFILTVETGPIGGITSQGIAFGANVNTRAILDMTSQFDFYHGGGLDVCYLSFAEVDQHGNVGVHKFNGKIMGTGGFIDISATSKKIIFCGTLTAGSLKTEITDGKLNIVQEGRVKKFIRELPEITFSGKIALERGLDVRYITERAVFTLKEDGLHLIEIAPGVDLQKDILDKMDFTPVISPELKLMDERLFIDAAMGFVLPEAAH</sequence>
<gene>
    <name type="primary">ydiF</name>
    <name type="ordered locus">b1694</name>
    <name type="ordered locus">JW1684</name>
</gene>
<dbReference type="EC" id="2.8.3.8" evidence="1"/>
<dbReference type="EMBL" id="U00096">
    <property type="protein sequence ID" value="AAC74764.1"/>
    <property type="molecule type" value="Genomic_DNA"/>
</dbReference>
<dbReference type="EMBL" id="AP009048">
    <property type="protein sequence ID" value="BAA15447.2"/>
    <property type="molecule type" value="Genomic_DNA"/>
</dbReference>
<dbReference type="EMBL" id="X04306">
    <property type="status" value="NOT_ANNOTATED_CDS"/>
    <property type="molecule type" value="Genomic_DNA"/>
</dbReference>
<dbReference type="PIR" id="F64927">
    <property type="entry name" value="F64927"/>
</dbReference>
<dbReference type="RefSeq" id="NP_416209.1">
    <property type="nucleotide sequence ID" value="NC_000913.3"/>
</dbReference>
<dbReference type="RefSeq" id="WP_000805700.1">
    <property type="nucleotide sequence ID" value="NZ_SSZK01000001.1"/>
</dbReference>
<dbReference type="SMR" id="P37766"/>
<dbReference type="BioGRID" id="4260290">
    <property type="interactions" value="23"/>
</dbReference>
<dbReference type="BioGRID" id="850571">
    <property type="interactions" value="1"/>
</dbReference>
<dbReference type="FunCoup" id="P37766">
    <property type="interactions" value="123"/>
</dbReference>
<dbReference type="IntAct" id="P37766">
    <property type="interactions" value="2"/>
</dbReference>
<dbReference type="STRING" id="511145.b1694"/>
<dbReference type="PaxDb" id="511145-b1694"/>
<dbReference type="DNASU" id="946211"/>
<dbReference type="EnsemblBacteria" id="AAC74764">
    <property type="protein sequence ID" value="AAC74764"/>
    <property type="gene ID" value="b1694"/>
</dbReference>
<dbReference type="GeneID" id="946211"/>
<dbReference type="KEGG" id="ecj:JW1684"/>
<dbReference type="KEGG" id="eco:b1694"/>
<dbReference type="PATRIC" id="fig|1411691.4.peg.564"/>
<dbReference type="EchoBASE" id="EB2328"/>
<dbReference type="eggNOG" id="COG4670">
    <property type="taxonomic scope" value="Bacteria"/>
</dbReference>
<dbReference type="HOGENOM" id="CLU_026774_4_0_6"/>
<dbReference type="InParanoid" id="P37766"/>
<dbReference type="OMA" id="VKTMGQI"/>
<dbReference type="PhylomeDB" id="P37766"/>
<dbReference type="BioCyc" id="EcoCyc:EG12432-MONOMER"/>
<dbReference type="PRO" id="PR:P37766"/>
<dbReference type="Proteomes" id="UP000000625">
    <property type="component" value="Chromosome"/>
</dbReference>
<dbReference type="GO" id="GO:0008775">
    <property type="term" value="F:acetate CoA-transferase activity"/>
    <property type="evidence" value="ECO:0000250"/>
    <property type="project" value="UniProtKB"/>
</dbReference>
<dbReference type="GO" id="GO:0046952">
    <property type="term" value="P:ketone body catabolic process"/>
    <property type="evidence" value="ECO:0007669"/>
    <property type="project" value="InterPro"/>
</dbReference>
<dbReference type="GO" id="GO:0051289">
    <property type="term" value="P:protein homotetramerization"/>
    <property type="evidence" value="ECO:0000250"/>
    <property type="project" value="UniProtKB"/>
</dbReference>
<dbReference type="GO" id="GO:0046459">
    <property type="term" value="P:short-chain fatty acid metabolic process"/>
    <property type="evidence" value="ECO:0000250"/>
    <property type="project" value="UniProtKB"/>
</dbReference>
<dbReference type="FunFam" id="3.40.1080.10:FF:000007">
    <property type="entry name" value="Acetate CoA-transferase YdiF"/>
    <property type="match status" value="1"/>
</dbReference>
<dbReference type="FunFam" id="3.40.1080.10:FF:000008">
    <property type="entry name" value="Acetate CoA-transferase YdiF"/>
    <property type="match status" value="1"/>
</dbReference>
<dbReference type="Gene3D" id="3.40.1080.10">
    <property type="entry name" value="Glutaconate Coenzyme A-transferase"/>
    <property type="match status" value="2"/>
</dbReference>
<dbReference type="InterPro" id="IPR014388">
    <property type="entry name" value="3-oxoacid_CoA-transferase"/>
</dbReference>
<dbReference type="InterPro" id="IPR004165">
    <property type="entry name" value="CoA_trans_fam_I"/>
</dbReference>
<dbReference type="InterPro" id="IPR037171">
    <property type="entry name" value="NagB/RpiA_transferase-like"/>
</dbReference>
<dbReference type="PANTHER" id="PTHR43293">
    <property type="entry name" value="ACETATE COA-TRANSFERASE YDIF"/>
    <property type="match status" value="1"/>
</dbReference>
<dbReference type="PANTHER" id="PTHR43293:SF1">
    <property type="entry name" value="ACETATE COA-TRANSFERASE YDIF"/>
    <property type="match status" value="1"/>
</dbReference>
<dbReference type="Pfam" id="PF01144">
    <property type="entry name" value="CoA_trans"/>
    <property type="match status" value="1"/>
</dbReference>
<dbReference type="PIRSF" id="PIRSF000858">
    <property type="entry name" value="SCOT-t"/>
    <property type="match status" value="1"/>
</dbReference>
<dbReference type="SMART" id="SM00882">
    <property type="entry name" value="CoA_trans"/>
    <property type="match status" value="1"/>
</dbReference>
<dbReference type="SUPFAM" id="SSF100950">
    <property type="entry name" value="NagB/RpiA/CoA transferase-like"/>
    <property type="match status" value="2"/>
</dbReference>
<organism>
    <name type="scientific">Escherichia coli (strain K12)</name>
    <dbReference type="NCBI Taxonomy" id="83333"/>
    <lineage>
        <taxon>Bacteria</taxon>
        <taxon>Pseudomonadati</taxon>
        <taxon>Pseudomonadota</taxon>
        <taxon>Gammaproteobacteria</taxon>
        <taxon>Enterobacterales</taxon>
        <taxon>Enterobacteriaceae</taxon>
        <taxon>Escherichia</taxon>
    </lineage>
</organism>
<protein>
    <recommendedName>
        <fullName evidence="1">Acetate CoA-transferase YdiF</fullName>
        <ecNumber evidence="1">2.8.3.8</ecNumber>
    </recommendedName>
    <alternativeName>
        <fullName>Short-chain acyl-CoA:acetate CoA-transferase</fullName>
    </alternativeName>
</protein>
<comment type="function">
    <text evidence="1">CoA transferase having broad substrate specificity for short-chain acyl-CoA thioesters with the activity decreasing when the length of the carboxylic acid chain exceeds four carbons. May play a role in short-chain fatty acid metabolism in E.coli.</text>
</comment>
<comment type="catalytic activity">
    <reaction evidence="1">
        <text>an acyl-CoA + acetate = a carboxylate + acetyl-CoA</text>
        <dbReference type="Rhea" id="RHEA:13381"/>
        <dbReference type="ChEBI" id="CHEBI:29067"/>
        <dbReference type="ChEBI" id="CHEBI:30089"/>
        <dbReference type="ChEBI" id="CHEBI:57288"/>
        <dbReference type="ChEBI" id="CHEBI:58342"/>
        <dbReference type="EC" id="2.8.3.8"/>
    </reaction>
</comment>
<comment type="subunit">
    <text evidence="1">Homotetramer; dimer of dimers.</text>
</comment>
<comment type="miscellaneous">
    <text evidence="1">Formation of the covalent enzyme-CoA thioester intermediate proceeds via an unstable anhydride species formed between the carboxylate group of the catalytic glutamate of the enzyme and the carbonyl carbon of the thioester linkage of the substrate.</text>
</comment>
<comment type="similarity">
    <text evidence="2">Belongs to the 3-oxoacid CoA-transferase family.</text>
</comment>
<name>YDIF_ECOLI</name>